<dbReference type="EMBL" id="CP001131">
    <property type="protein sequence ID" value="ACG73836.1"/>
    <property type="molecule type" value="Genomic_DNA"/>
</dbReference>
<dbReference type="RefSeq" id="WP_012526618.1">
    <property type="nucleotide sequence ID" value="NC_011145.1"/>
</dbReference>
<dbReference type="SMR" id="B4UGY2"/>
<dbReference type="KEGG" id="ank:AnaeK_2611"/>
<dbReference type="HOGENOM" id="CLU_064548_7_0_7"/>
<dbReference type="OrthoDB" id="9805609at2"/>
<dbReference type="Proteomes" id="UP000001871">
    <property type="component" value="Chromosome"/>
</dbReference>
<dbReference type="GO" id="GO:1990904">
    <property type="term" value="C:ribonucleoprotein complex"/>
    <property type="evidence" value="ECO:0007669"/>
    <property type="project" value="UniProtKB-KW"/>
</dbReference>
<dbReference type="GO" id="GO:0005840">
    <property type="term" value="C:ribosome"/>
    <property type="evidence" value="ECO:0007669"/>
    <property type="project" value="UniProtKB-KW"/>
</dbReference>
<dbReference type="GO" id="GO:0003735">
    <property type="term" value="F:structural constituent of ribosome"/>
    <property type="evidence" value="ECO:0007669"/>
    <property type="project" value="InterPro"/>
</dbReference>
<dbReference type="GO" id="GO:0006412">
    <property type="term" value="P:translation"/>
    <property type="evidence" value="ECO:0007669"/>
    <property type="project" value="UniProtKB-UniRule"/>
</dbReference>
<dbReference type="Gene3D" id="2.20.150.30">
    <property type="match status" value="1"/>
</dbReference>
<dbReference type="Gene3D" id="2.30.170.40">
    <property type="entry name" value="Ribosomal protein L28/L24"/>
    <property type="match status" value="1"/>
</dbReference>
<dbReference type="HAMAP" id="MF_00373">
    <property type="entry name" value="Ribosomal_bL28"/>
    <property type="match status" value="1"/>
</dbReference>
<dbReference type="InterPro" id="IPR050096">
    <property type="entry name" value="Bacterial_rp_bL28"/>
</dbReference>
<dbReference type="InterPro" id="IPR026569">
    <property type="entry name" value="Ribosomal_bL28"/>
</dbReference>
<dbReference type="InterPro" id="IPR034704">
    <property type="entry name" value="Ribosomal_bL28/bL31-like_sf"/>
</dbReference>
<dbReference type="InterPro" id="IPR001383">
    <property type="entry name" value="Ribosomal_bL28_bact-type"/>
</dbReference>
<dbReference type="InterPro" id="IPR037147">
    <property type="entry name" value="Ribosomal_bL28_sf"/>
</dbReference>
<dbReference type="NCBIfam" id="TIGR00009">
    <property type="entry name" value="L28"/>
    <property type="match status" value="1"/>
</dbReference>
<dbReference type="PANTHER" id="PTHR39080">
    <property type="entry name" value="50S RIBOSOMAL PROTEIN L28"/>
    <property type="match status" value="1"/>
</dbReference>
<dbReference type="PANTHER" id="PTHR39080:SF1">
    <property type="entry name" value="LARGE RIBOSOMAL SUBUNIT PROTEIN BL28A"/>
    <property type="match status" value="1"/>
</dbReference>
<dbReference type="Pfam" id="PF00830">
    <property type="entry name" value="Ribosomal_L28"/>
    <property type="match status" value="1"/>
</dbReference>
<dbReference type="SUPFAM" id="SSF143800">
    <property type="entry name" value="L28p-like"/>
    <property type="match status" value="1"/>
</dbReference>
<sequence>MARRCEICGKGPLVGNTVSHANNKNKTRSLPNLRSVRANLAGEIRHIRVCTRCLKAGKVVKAGRGRPTASAQA</sequence>
<evidence type="ECO:0000255" key="1">
    <source>
        <dbReference type="HAMAP-Rule" id="MF_00373"/>
    </source>
</evidence>
<evidence type="ECO:0000305" key="2"/>
<organism>
    <name type="scientific">Anaeromyxobacter sp. (strain K)</name>
    <dbReference type="NCBI Taxonomy" id="447217"/>
    <lineage>
        <taxon>Bacteria</taxon>
        <taxon>Pseudomonadati</taxon>
        <taxon>Myxococcota</taxon>
        <taxon>Myxococcia</taxon>
        <taxon>Myxococcales</taxon>
        <taxon>Cystobacterineae</taxon>
        <taxon>Anaeromyxobacteraceae</taxon>
        <taxon>Anaeromyxobacter</taxon>
    </lineage>
</organism>
<proteinExistence type="inferred from homology"/>
<accession>B4UGY2</accession>
<comment type="similarity">
    <text evidence="1">Belongs to the bacterial ribosomal protein bL28 family.</text>
</comment>
<name>RL28_ANASK</name>
<protein>
    <recommendedName>
        <fullName evidence="1">Large ribosomal subunit protein bL28</fullName>
    </recommendedName>
    <alternativeName>
        <fullName evidence="2">50S ribosomal protein L28</fullName>
    </alternativeName>
</protein>
<feature type="chain" id="PRO_1000121579" description="Large ribosomal subunit protein bL28">
    <location>
        <begin position="1"/>
        <end position="73"/>
    </location>
</feature>
<reference key="1">
    <citation type="submission" date="2008-08" db="EMBL/GenBank/DDBJ databases">
        <title>Complete sequence of Anaeromyxobacter sp. K.</title>
        <authorList>
            <consortium name="US DOE Joint Genome Institute"/>
            <person name="Lucas S."/>
            <person name="Copeland A."/>
            <person name="Lapidus A."/>
            <person name="Glavina del Rio T."/>
            <person name="Dalin E."/>
            <person name="Tice H."/>
            <person name="Bruce D."/>
            <person name="Goodwin L."/>
            <person name="Pitluck S."/>
            <person name="Saunders E."/>
            <person name="Brettin T."/>
            <person name="Detter J.C."/>
            <person name="Han C."/>
            <person name="Larimer F."/>
            <person name="Land M."/>
            <person name="Hauser L."/>
            <person name="Kyrpides N."/>
            <person name="Ovchinnikiva G."/>
            <person name="Beliaev A."/>
        </authorList>
    </citation>
    <scope>NUCLEOTIDE SEQUENCE [LARGE SCALE GENOMIC DNA]</scope>
    <source>
        <strain>K</strain>
    </source>
</reference>
<keyword id="KW-0687">Ribonucleoprotein</keyword>
<keyword id="KW-0689">Ribosomal protein</keyword>
<gene>
    <name evidence="1" type="primary">rpmB</name>
    <name type="ordered locus">AnaeK_2611</name>
</gene>